<dbReference type="EC" id="3.5.1.5" evidence="1"/>
<dbReference type="EMBL" id="CP000568">
    <property type="protein sequence ID" value="ABN53039.1"/>
    <property type="molecule type" value="Genomic_DNA"/>
</dbReference>
<dbReference type="RefSeq" id="WP_003515805.1">
    <property type="nucleotide sequence ID" value="NC_009012.1"/>
</dbReference>
<dbReference type="SMR" id="A3DGG0"/>
<dbReference type="STRING" id="203119.Cthe_1818"/>
<dbReference type="GeneID" id="93968720"/>
<dbReference type="KEGG" id="cth:Cthe_1818"/>
<dbReference type="eggNOG" id="COG0831">
    <property type="taxonomic scope" value="Bacteria"/>
</dbReference>
<dbReference type="HOGENOM" id="CLU_145825_1_0_9"/>
<dbReference type="OrthoDB" id="9793527at2"/>
<dbReference type="UniPathway" id="UPA00258">
    <property type="reaction ID" value="UER00370"/>
</dbReference>
<dbReference type="Proteomes" id="UP000002145">
    <property type="component" value="Chromosome"/>
</dbReference>
<dbReference type="GO" id="GO:0005737">
    <property type="term" value="C:cytoplasm"/>
    <property type="evidence" value="ECO:0007669"/>
    <property type="project" value="UniProtKB-SubCell"/>
</dbReference>
<dbReference type="GO" id="GO:0016151">
    <property type="term" value="F:nickel cation binding"/>
    <property type="evidence" value="ECO:0007669"/>
    <property type="project" value="InterPro"/>
</dbReference>
<dbReference type="GO" id="GO:0009039">
    <property type="term" value="F:urease activity"/>
    <property type="evidence" value="ECO:0007669"/>
    <property type="project" value="UniProtKB-UniRule"/>
</dbReference>
<dbReference type="GO" id="GO:0043419">
    <property type="term" value="P:urea catabolic process"/>
    <property type="evidence" value="ECO:0007669"/>
    <property type="project" value="UniProtKB-UniRule"/>
</dbReference>
<dbReference type="CDD" id="cd00390">
    <property type="entry name" value="Urease_gamma"/>
    <property type="match status" value="1"/>
</dbReference>
<dbReference type="FunFam" id="3.30.280.10:FF:000001">
    <property type="entry name" value="Urease subunit alpha"/>
    <property type="match status" value="1"/>
</dbReference>
<dbReference type="Gene3D" id="3.30.280.10">
    <property type="entry name" value="Urease, gamma-like subunit"/>
    <property type="match status" value="1"/>
</dbReference>
<dbReference type="HAMAP" id="MF_00739">
    <property type="entry name" value="Urease_gamma"/>
    <property type="match status" value="1"/>
</dbReference>
<dbReference type="InterPro" id="IPR012010">
    <property type="entry name" value="Urease_gamma"/>
</dbReference>
<dbReference type="InterPro" id="IPR002026">
    <property type="entry name" value="Urease_gamma/gamma-beta_su"/>
</dbReference>
<dbReference type="InterPro" id="IPR036463">
    <property type="entry name" value="Urease_gamma_sf"/>
</dbReference>
<dbReference type="InterPro" id="IPR050069">
    <property type="entry name" value="Urease_subunit"/>
</dbReference>
<dbReference type="NCBIfam" id="NF009712">
    <property type="entry name" value="PRK13241.1"/>
    <property type="match status" value="1"/>
</dbReference>
<dbReference type="NCBIfam" id="TIGR00193">
    <property type="entry name" value="urease_gam"/>
    <property type="match status" value="1"/>
</dbReference>
<dbReference type="PANTHER" id="PTHR33569">
    <property type="entry name" value="UREASE"/>
    <property type="match status" value="1"/>
</dbReference>
<dbReference type="PANTHER" id="PTHR33569:SF1">
    <property type="entry name" value="UREASE"/>
    <property type="match status" value="1"/>
</dbReference>
<dbReference type="Pfam" id="PF00547">
    <property type="entry name" value="Urease_gamma"/>
    <property type="match status" value="1"/>
</dbReference>
<dbReference type="PIRSF" id="PIRSF001223">
    <property type="entry name" value="Urease_gamma"/>
    <property type="match status" value="1"/>
</dbReference>
<dbReference type="SUPFAM" id="SSF54111">
    <property type="entry name" value="Urease, gamma-subunit"/>
    <property type="match status" value="1"/>
</dbReference>
<name>URE3_ACET2</name>
<comment type="catalytic activity">
    <reaction evidence="1">
        <text>urea + 2 H2O + H(+) = hydrogencarbonate + 2 NH4(+)</text>
        <dbReference type="Rhea" id="RHEA:20557"/>
        <dbReference type="ChEBI" id="CHEBI:15377"/>
        <dbReference type="ChEBI" id="CHEBI:15378"/>
        <dbReference type="ChEBI" id="CHEBI:16199"/>
        <dbReference type="ChEBI" id="CHEBI:17544"/>
        <dbReference type="ChEBI" id="CHEBI:28938"/>
        <dbReference type="EC" id="3.5.1.5"/>
    </reaction>
</comment>
<comment type="pathway">
    <text evidence="1">Nitrogen metabolism; urea degradation; CO(2) and NH(3) from urea (urease route): step 1/1.</text>
</comment>
<comment type="subunit">
    <text evidence="1">Heterotrimer of UreA (gamma), UreB (beta) and UreC (alpha) subunits. Three heterotrimers associate to form the active enzyme.</text>
</comment>
<comment type="subcellular location">
    <subcellularLocation>
        <location evidence="1">Cytoplasm</location>
    </subcellularLocation>
</comment>
<comment type="similarity">
    <text evidence="1">Belongs to the urease gamma subunit family.</text>
</comment>
<accession>A3DGG0</accession>
<reference key="1">
    <citation type="submission" date="2007-02" db="EMBL/GenBank/DDBJ databases">
        <title>Complete sequence of Clostridium thermocellum ATCC 27405.</title>
        <authorList>
            <consortium name="US DOE Joint Genome Institute"/>
            <person name="Copeland A."/>
            <person name="Lucas S."/>
            <person name="Lapidus A."/>
            <person name="Barry K."/>
            <person name="Detter J.C."/>
            <person name="Glavina del Rio T."/>
            <person name="Hammon N."/>
            <person name="Israni S."/>
            <person name="Dalin E."/>
            <person name="Tice H."/>
            <person name="Pitluck S."/>
            <person name="Chertkov O."/>
            <person name="Brettin T."/>
            <person name="Bruce D."/>
            <person name="Han C."/>
            <person name="Tapia R."/>
            <person name="Gilna P."/>
            <person name="Schmutz J."/>
            <person name="Larimer F."/>
            <person name="Land M."/>
            <person name="Hauser L."/>
            <person name="Kyrpides N."/>
            <person name="Mikhailova N."/>
            <person name="Wu J.H.D."/>
            <person name="Newcomb M."/>
            <person name="Richardson P."/>
        </authorList>
    </citation>
    <scope>NUCLEOTIDE SEQUENCE [LARGE SCALE GENOMIC DNA]</scope>
    <source>
        <strain>ATCC 27405 / DSM 1237 / JCM 9322 / NBRC 103400 / NCIMB 10682 / NRRL B-4536 / VPI 7372</strain>
    </source>
</reference>
<keyword id="KW-0963">Cytoplasm</keyword>
<keyword id="KW-0378">Hydrolase</keyword>
<keyword id="KW-1185">Reference proteome</keyword>
<sequence length="100" mass="11317">MHLTPRETEKLMLHYAGELARKRKERGLKLNYPEAVALISAELMEAARDGKTVTELMQYGAKILTRDDVMEGVDAMIHEIQIEATFPDGTKLVTVHNPIR</sequence>
<evidence type="ECO:0000255" key="1">
    <source>
        <dbReference type="HAMAP-Rule" id="MF_00739"/>
    </source>
</evidence>
<gene>
    <name evidence="1" type="primary">ureA</name>
    <name type="ordered locus">Cthe_1818</name>
</gene>
<protein>
    <recommendedName>
        <fullName evidence="1">Urease subunit gamma</fullName>
        <ecNumber evidence="1">3.5.1.5</ecNumber>
    </recommendedName>
    <alternativeName>
        <fullName evidence="1">Urea amidohydrolase subunit gamma</fullName>
    </alternativeName>
</protein>
<feature type="chain" id="PRO_1000046324" description="Urease subunit gamma">
    <location>
        <begin position="1"/>
        <end position="100"/>
    </location>
</feature>
<organism>
    <name type="scientific">Acetivibrio thermocellus (strain ATCC 27405 / DSM 1237 / JCM 9322 / NBRC 103400 / NCIMB 10682 / NRRL B-4536 / VPI 7372)</name>
    <name type="common">Clostridium thermocellum</name>
    <dbReference type="NCBI Taxonomy" id="203119"/>
    <lineage>
        <taxon>Bacteria</taxon>
        <taxon>Bacillati</taxon>
        <taxon>Bacillota</taxon>
        <taxon>Clostridia</taxon>
        <taxon>Eubacteriales</taxon>
        <taxon>Oscillospiraceae</taxon>
        <taxon>Acetivibrio</taxon>
    </lineage>
</organism>
<proteinExistence type="inferred from homology"/>